<name>RPOE_MYCGE</name>
<keyword id="KW-0240">DNA-directed RNA polymerase</keyword>
<keyword id="KW-0548">Nucleotidyltransferase</keyword>
<keyword id="KW-1185">Reference proteome</keyword>
<keyword id="KW-0804">Transcription</keyword>
<keyword id="KW-0808">Transferase</keyword>
<accession>P47268</accession>
<accession>Q49195</accession>
<sequence>MQLEYLNLISQAKVIAEKQFKANPFSFETIWKEVVKHFKISKQDEPSLIGRFYQDFLEDPNFVYLGDRKWKLRDFMKFDEWNKISQSMFVTKEIFEEGYEDLSNKKVEPEEGVGDFIMGNDGDDNETGSEIVQGLINDSFSEENQ</sequence>
<protein>
    <recommendedName>
        <fullName>Probable DNA-directed RNA polymerase subunit delta</fullName>
    </recommendedName>
    <alternativeName>
        <fullName>RNAP delta factor</fullName>
    </alternativeName>
</protein>
<reference key="1">
    <citation type="journal article" date="1995" name="Science">
        <title>The minimal gene complement of Mycoplasma genitalium.</title>
        <authorList>
            <person name="Fraser C.M."/>
            <person name="Gocayne J.D."/>
            <person name="White O."/>
            <person name="Adams M.D."/>
            <person name="Clayton R.A."/>
            <person name="Fleischmann R.D."/>
            <person name="Bult C.J."/>
            <person name="Kerlavage A.R."/>
            <person name="Sutton G.G."/>
            <person name="Kelley J.M."/>
            <person name="Fritchman J.L."/>
            <person name="Weidman J.F."/>
            <person name="Small K.V."/>
            <person name="Sandusky M."/>
            <person name="Fuhrmann J.L."/>
            <person name="Nguyen D.T."/>
            <person name="Utterback T.R."/>
            <person name="Saudek D.M."/>
            <person name="Phillips C.A."/>
            <person name="Merrick J.M."/>
            <person name="Tomb J.-F."/>
            <person name="Dougherty B.A."/>
            <person name="Bott K.F."/>
            <person name="Hu P.-C."/>
            <person name="Lucier T.S."/>
            <person name="Peterson S.N."/>
            <person name="Smith H.O."/>
            <person name="Hutchison C.A. III"/>
            <person name="Venter J.C."/>
        </authorList>
    </citation>
    <scope>NUCLEOTIDE SEQUENCE [LARGE SCALE GENOMIC DNA]</scope>
    <source>
        <strain>ATCC 33530 / DSM 19775 / NCTC 10195 / G37</strain>
    </source>
</reference>
<reference key="2">
    <citation type="journal article" date="1993" name="J. Bacteriol.">
        <title>A survey of the Mycoplasma genitalium genome by using random sequencing.</title>
        <authorList>
            <person name="Peterson S.N."/>
            <person name="Hu P.-C."/>
            <person name="Bott K.F."/>
            <person name="Hutchison C.A. III"/>
        </authorList>
    </citation>
    <scope>NUCLEOTIDE SEQUENCE [GENOMIC DNA] OF 1-95</scope>
    <source>
        <strain>ATCC 33530 / DSM 19775 / NCTC 10195 / G37</strain>
    </source>
</reference>
<proteinExistence type="inferred from homology"/>
<organism>
    <name type="scientific">Mycoplasma genitalium (strain ATCC 33530 / DSM 19775 / NCTC 10195 / G37)</name>
    <name type="common">Mycoplasmoides genitalium</name>
    <dbReference type="NCBI Taxonomy" id="243273"/>
    <lineage>
        <taxon>Bacteria</taxon>
        <taxon>Bacillati</taxon>
        <taxon>Mycoplasmatota</taxon>
        <taxon>Mycoplasmoidales</taxon>
        <taxon>Mycoplasmoidaceae</taxon>
        <taxon>Mycoplasmoides</taxon>
    </lineage>
</organism>
<comment type="function">
    <text evidence="1">Participates in both the initiation and recycling phases of transcription. In the presence of the delta subunit, RNAP displays an increased specificity of transcription, a decreased affinity for nucleic acids, and an increased efficiency of RNA synthesis because of enhanced recycling (By similarity).</text>
</comment>
<comment type="subunit">
    <text evidence="1">RNAP is composed of a core of 2 alpha, a beta and a beta' subunits. The core is associated with a delta subunit and one of several sigma factors (By similarity).</text>
</comment>
<comment type="similarity">
    <text evidence="3">Belongs to the RpoE family.</text>
</comment>
<comment type="sequence caution" evidence="3">
    <conflict type="erroneous initiation">
        <sequence resource="EMBL-CDS" id="AAC43196"/>
    </conflict>
</comment>
<evidence type="ECO:0000250" key="1"/>
<evidence type="ECO:0000255" key="2">
    <source>
        <dbReference type="PROSITE-ProRule" id="PRU01261"/>
    </source>
</evidence>
<evidence type="ECO:0000305" key="3"/>
<dbReference type="EMBL" id="L43967">
    <property type="protein sequence ID" value="AAC71238.1"/>
    <property type="molecule type" value="Genomic_DNA"/>
</dbReference>
<dbReference type="EMBL" id="U01721">
    <property type="protein sequence ID" value="AAC43196.1"/>
    <property type="status" value="ALT_INIT"/>
    <property type="molecule type" value="Unassigned_DNA"/>
</dbReference>
<dbReference type="PIR" id="D64202">
    <property type="entry name" value="D64202"/>
</dbReference>
<dbReference type="RefSeq" id="WP_009885918.1">
    <property type="nucleotide sequence ID" value="NC_000908.2"/>
</dbReference>
<dbReference type="SMR" id="P47268"/>
<dbReference type="FunCoup" id="P47268">
    <property type="interactions" value="3"/>
</dbReference>
<dbReference type="STRING" id="243273.MG_022"/>
<dbReference type="GeneID" id="88282137"/>
<dbReference type="KEGG" id="mge:MG_022"/>
<dbReference type="eggNOG" id="COG3343">
    <property type="taxonomic scope" value="Bacteria"/>
</dbReference>
<dbReference type="HOGENOM" id="CLU_1775406_0_0_14"/>
<dbReference type="InParanoid" id="P47268"/>
<dbReference type="OrthoDB" id="400111at2"/>
<dbReference type="BioCyc" id="MGEN243273:G1GJ2-22-MONOMER"/>
<dbReference type="Proteomes" id="UP000000807">
    <property type="component" value="Chromosome"/>
</dbReference>
<dbReference type="GO" id="GO:0000428">
    <property type="term" value="C:DNA-directed RNA polymerase complex"/>
    <property type="evidence" value="ECO:0007669"/>
    <property type="project" value="UniProtKB-KW"/>
</dbReference>
<dbReference type="GO" id="GO:0003899">
    <property type="term" value="F:DNA-directed RNA polymerase activity"/>
    <property type="evidence" value="ECO:0007669"/>
    <property type="project" value="UniProtKB-UniRule"/>
</dbReference>
<dbReference type="GO" id="GO:0006351">
    <property type="term" value="P:DNA-templated transcription"/>
    <property type="evidence" value="ECO:0007669"/>
    <property type="project" value="InterPro"/>
</dbReference>
<dbReference type="GO" id="GO:0006355">
    <property type="term" value="P:regulation of DNA-templated transcription"/>
    <property type="evidence" value="ECO:0007669"/>
    <property type="project" value="UniProtKB-UniRule"/>
</dbReference>
<dbReference type="Gene3D" id="1.10.10.1250">
    <property type="entry name" value="RNA polymerase, subunit delta, N-terminal domain"/>
    <property type="match status" value="1"/>
</dbReference>
<dbReference type="HAMAP" id="MF_00357">
    <property type="entry name" value="RNApol_bact_RpoE"/>
    <property type="match status" value="1"/>
</dbReference>
<dbReference type="InterPro" id="IPR007759">
    <property type="entry name" value="Asxl_HARE-HTH"/>
</dbReference>
<dbReference type="InterPro" id="IPR038087">
    <property type="entry name" value="RNAP_delta_N_dom_sf"/>
</dbReference>
<dbReference type="InterPro" id="IPR029757">
    <property type="entry name" value="RpoE"/>
</dbReference>
<dbReference type="NCBIfam" id="TIGR04567">
    <property type="entry name" value="RNAP_delt_lowGC"/>
    <property type="match status" value="1"/>
</dbReference>
<dbReference type="Pfam" id="PF05066">
    <property type="entry name" value="HARE-HTH"/>
    <property type="match status" value="1"/>
</dbReference>
<dbReference type="PROSITE" id="PS51913">
    <property type="entry name" value="HTH_HARE"/>
    <property type="match status" value="1"/>
</dbReference>
<feature type="chain" id="PRO_0000204318" description="Probable DNA-directed RNA polymerase subunit delta">
    <location>
        <begin position="1"/>
        <end position="145"/>
    </location>
</feature>
<feature type="domain" description="HTH HARE-type" evidence="2">
    <location>
        <begin position="6"/>
        <end position="75"/>
    </location>
</feature>
<gene>
    <name type="primary">rpoE</name>
    <name type="ordered locus">MG022</name>
</gene>